<gene>
    <name evidence="1" type="primary">groEL</name>
    <name evidence="1" type="synonym">groL</name>
    <name type="ordered locus">SEQ_0209</name>
</gene>
<name>CH60_STRE4</name>
<organism>
    <name type="scientific">Streptococcus equi subsp. equi (strain 4047)</name>
    <dbReference type="NCBI Taxonomy" id="553482"/>
    <lineage>
        <taxon>Bacteria</taxon>
        <taxon>Bacillati</taxon>
        <taxon>Bacillota</taxon>
        <taxon>Bacilli</taxon>
        <taxon>Lactobacillales</taxon>
        <taxon>Streptococcaceae</taxon>
        <taxon>Streptococcus</taxon>
    </lineage>
</organism>
<accession>C0M7S3</accession>
<keyword id="KW-0067">ATP-binding</keyword>
<keyword id="KW-0143">Chaperone</keyword>
<keyword id="KW-0963">Cytoplasm</keyword>
<keyword id="KW-0413">Isomerase</keyword>
<keyword id="KW-0547">Nucleotide-binding</keyword>
<sequence length="541" mass="56930">MAKDIKFSADARESMVRGVDILADTVKVTLGPKGRNVVLEKAFGSPLITNDGVTIAKEIELEDHFENMGAKLVSEVASKTNDIAGDGTTTATVLTQAIVREGLKNVTAGANPIGIRRGIEAATTTAVEALKAVAQPVSGKEAIAQVASVSSRSEKVGDYISEAMERVGNDGVITIEESRGMETELEVVEGMQFDRGYLSQYMVTDNEKMVADLENPFILITDKKISNIQDILPLLEEVLKTSRPLLIIADDVDGEALPTLVLNKIRGTFNVVAVKAPGFGDRRKAMLEDIAVLTGGTVITEDLGLELKDATMAALGQAAKVTVDKDNTVIVEGAGSSEAISNRVSLIKSQLETTTSEFDREKLQERLAKLAGGVAVIKVGAATETELKEMKLRIEDALNATRAAVEEGIVAGGGTALINVMDKVAALELDGDAATGRNIVLRALEEPVRQIAYNAGYEGSVIIDKLKNSAAGIGFNAATGEWVDMIATGIIDPVKVTRSALQNAASVAGLILTTEAVVATKPEPAAPAMPQGMDPGMMGGF</sequence>
<protein>
    <recommendedName>
        <fullName evidence="1">Chaperonin GroEL</fullName>
        <ecNumber evidence="1">5.6.1.7</ecNumber>
    </recommendedName>
    <alternativeName>
        <fullName evidence="1">60 kDa chaperonin</fullName>
    </alternativeName>
    <alternativeName>
        <fullName evidence="1">Chaperonin-60</fullName>
        <shortName evidence="1">Cpn60</shortName>
    </alternativeName>
</protein>
<feature type="chain" id="PRO_1000147043" description="Chaperonin GroEL">
    <location>
        <begin position="1"/>
        <end position="541"/>
    </location>
</feature>
<feature type="binding site" evidence="1">
    <location>
        <begin position="29"/>
        <end position="32"/>
    </location>
    <ligand>
        <name>ATP</name>
        <dbReference type="ChEBI" id="CHEBI:30616"/>
    </ligand>
</feature>
<feature type="binding site" evidence="1">
    <location>
        <begin position="86"/>
        <end position="90"/>
    </location>
    <ligand>
        <name>ATP</name>
        <dbReference type="ChEBI" id="CHEBI:30616"/>
    </ligand>
</feature>
<feature type="binding site" evidence="1">
    <location>
        <position position="413"/>
    </location>
    <ligand>
        <name>ATP</name>
        <dbReference type="ChEBI" id="CHEBI:30616"/>
    </ligand>
</feature>
<feature type="binding site" evidence="1">
    <location>
        <begin position="476"/>
        <end position="478"/>
    </location>
    <ligand>
        <name>ATP</name>
        <dbReference type="ChEBI" id="CHEBI:30616"/>
    </ligand>
</feature>
<feature type="binding site" evidence="1">
    <location>
        <position position="492"/>
    </location>
    <ligand>
        <name>ATP</name>
        <dbReference type="ChEBI" id="CHEBI:30616"/>
    </ligand>
</feature>
<proteinExistence type="inferred from homology"/>
<dbReference type="EC" id="5.6.1.7" evidence="1"/>
<dbReference type="EMBL" id="FM204883">
    <property type="protein sequence ID" value="CAW92231.1"/>
    <property type="molecule type" value="Genomic_DNA"/>
</dbReference>
<dbReference type="RefSeq" id="WP_012678897.1">
    <property type="nucleotide sequence ID" value="NC_012471.1"/>
</dbReference>
<dbReference type="SMR" id="C0M7S3"/>
<dbReference type="KEGG" id="seu:SEQ_0209"/>
<dbReference type="HOGENOM" id="CLU_016503_3_0_9"/>
<dbReference type="OrthoDB" id="9766614at2"/>
<dbReference type="Proteomes" id="UP000001365">
    <property type="component" value="Chromosome"/>
</dbReference>
<dbReference type="GO" id="GO:0005737">
    <property type="term" value="C:cytoplasm"/>
    <property type="evidence" value="ECO:0007669"/>
    <property type="project" value="UniProtKB-SubCell"/>
</dbReference>
<dbReference type="GO" id="GO:0005524">
    <property type="term" value="F:ATP binding"/>
    <property type="evidence" value="ECO:0007669"/>
    <property type="project" value="UniProtKB-UniRule"/>
</dbReference>
<dbReference type="GO" id="GO:0140662">
    <property type="term" value="F:ATP-dependent protein folding chaperone"/>
    <property type="evidence" value="ECO:0007669"/>
    <property type="project" value="InterPro"/>
</dbReference>
<dbReference type="GO" id="GO:0016853">
    <property type="term" value="F:isomerase activity"/>
    <property type="evidence" value="ECO:0007669"/>
    <property type="project" value="UniProtKB-KW"/>
</dbReference>
<dbReference type="GO" id="GO:0051082">
    <property type="term" value="F:unfolded protein binding"/>
    <property type="evidence" value="ECO:0007669"/>
    <property type="project" value="UniProtKB-UniRule"/>
</dbReference>
<dbReference type="GO" id="GO:0042026">
    <property type="term" value="P:protein refolding"/>
    <property type="evidence" value="ECO:0007669"/>
    <property type="project" value="UniProtKB-UniRule"/>
</dbReference>
<dbReference type="CDD" id="cd03344">
    <property type="entry name" value="GroEL"/>
    <property type="match status" value="1"/>
</dbReference>
<dbReference type="FunFam" id="1.10.560.10:FF:000001">
    <property type="entry name" value="60 kDa chaperonin"/>
    <property type="match status" value="1"/>
</dbReference>
<dbReference type="FunFam" id="3.50.7.10:FF:000001">
    <property type="entry name" value="60 kDa chaperonin"/>
    <property type="match status" value="1"/>
</dbReference>
<dbReference type="Gene3D" id="3.50.7.10">
    <property type="entry name" value="GroEL"/>
    <property type="match status" value="1"/>
</dbReference>
<dbReference type="Gene3D" id="1.10.560.10">
    <property type="entry name" value="GroEL-like equatorial domain"/>
    <property type="match status" value="1"/>
</dbReference>
<dbReference type="Gene3D" id="3.30.260.10">
    <property type="entry name" value="TCP-1-like chaperonin intermediate domain"/>
    <property type="match status" value="1"/>
</dbReference>
<dbReference type="HAMAP" id="MF_00600">
    <property type="entry name" value="CH60"/>
    <property type="match status" value="1"/>
</dbReference>
<dbReference type="InterPro" id="IPR018370">
    <property type="entry name" value="Chaperonin_Cpn60_CS"/>
</dbReference>
<dbReference type="InterPro" id="IPR001844">
    <property type="entry name" value="Cpn60/GroEL"/>
</dbReference>
<dbReference type="InterPro" id="IPR002423">
    <property type="entry name" value="Cpn60/GroEL/TCP-1"/>
</dbReference>
<dbReference type="InterPro" id="IPR027409">
    <property type="entry name" value="GroEL-like_apical_dom_sf"/>
</dbReference>
<dbReference type="InterPro" id="IPR027413">
    <property type="entry name" value="GROEL-like_equatorial_sf"/>
</dbReference>
<dbReference type="InterPro" id="IPR027410">
    <property type="entry name" value="TCP-1-like_intermed_sf"/>
</dbReference>
<dbReference type="NCBIfam" id="TIGR02348">
    <property type="entry name" value="GroEL"/>
    <property type="match status" value="1"/>
</dbReference>
<dbReference type="NCBIfam" id="NF000592">
    <property type="entry name" value="PRK00013.1"/>
    <property type="match status" value="1"/>
</dbReference>
<dbReference type="NCBIfam" id="NF009487">
    <property type="entry name" value="PRK12849.1"/>
    <property type="match status" value="1"/>
</dbReference>
<dbReference type="NCBIfam" id="NF009488">
    <property type="entry name" value="PRK12850.1"/>
    <property type="match status" value="1"/>
</dbReference>
<dbReference type="NCBIfam" id="NF009489">
    <property type="entry name" value="PRK12851.1"/>
    <property type="match status" value="1"/>
</dbReference>
<dbReference type="PANTHER" id="PTHR45633">
    <property type="entry name" value="60 KDA HEAT SHOCK PROTEIN, MITOCHONDRIAL"/>
    <property type="match status" value="1"/>
</dbReference>
<dbReference type="Pfam" id="PF00118">
    <property type="entry name" value="Cpn60_TCP1"/>
    <property type="match status" value="1"/>
</dbReference>
<dbReference type="PRINTS" id="PR00298">
    <property type="entry name" value="CHAPERONIN60"/>
</dbReference>
<dbReference type="SUPFAM" id="SSF52029">
    <property type="entry name" value="GroEL apical domain-like"/>
    <property type="match status" value="1"/>
</dbReference>
<dbReference type="SUPFAM" id="SSF48592">
    <property type="entry name" value="GroEL equatorial domain-like"/>
    <property type="match status" value="1"/>
</dbReference>
<dbReference type="SUPFAM" id="SSF54849">
    <property type="entry name" value="GroEL-intermediate domain like"/>
    <property type="match status" value="1"/>
</dbReference>
<dbReference type="PROSITE" id="PS00296">
    <property type="entry name" value="CHAPERONINS_CPN60"/>
    <property type="match status" value="1"/>
</dbReference>
<comment type="function">
    <text evidence="1">Together with its co-chaperonin GroES, plays an essential role in assisting protein folding. The GroEL-GroES system forms a nano-cage that allows encapsulation of the non-native substrate proteins and provides a physical environment optimized to promote and accelerate protein folding.</text>
</comment>
<comment type="catalytic activity">
    <reaction evidence="1">
        <text>ATP + H2O + a folded polypeptide = ADP + phosphate + an unfolded polypeptide.</text>
        <dbReference type="EC" id="5.6.1.7"/>
    </reaction>
</comment>
<comment type="subunit">
    <text evidence="1">Forms a cylinder of 14 subunits composed of two heptameric rings stacked back-to-back. Interacts with the co-chaperonin GroES.</text>
</comment>
<comment type="subcellular location">
    <subcellularLocation>
        <location evidence="1">Cytoplasm</location>
    </subcellularLocation>
</comment>
<comment type="similarity">
    <text evidence="1">Belongs to the chaperonin (HSP60) family.</text>
</comment>
<evidence type="ECO:0000255" key="1">
    <source>
        <dbReference type="HAMAP-Rule" id="MF_00600"/>
    </source>
</evidence>
<reference key="1">
    <citation type="journal article" date="2009" name="PLoS Pathog.">
        <title>Genomic evidence for the evolution of Streptococcus equi: host restriction, increased virulence, and genetic exchange with human pathogens.</title>
        <authorList>
            <person name="Holden M.T.G."/>
            <person name="Heather Z."/>
            <person name="Paillot R."/>
            <person name="Steward K.F."/>
            <person name="Webb K."/>
            <person name="Ainslie F."/>
            <person name="Jourdan T."/>
            <person name="Bason N.C."/>
            <person name="Holroyd N.E."/>
            <person name="Mungall K."/>
            <person name="Quail M.A."/>
            <person name="Sanders M."/>
            <person name="Simmonds M."/>
            <person name="Willey D."/>
            <person name="Brooks K."/>
            <person name="Aanensen D.M."/>
            <person name="Spratt B.G."/>
            <person name="Jolley K.A."/>
            <person name="Maiden M.C.J."/>
            <person name="Kehoe M."/>
            <person name="Chanter N."/>
            <person name="Bentley S.D."/>
            <person name="Robinson C."/>
            <person name="Maskell D.J."/>
            <person name="Parkhill J."/>
            <person name="Waller A.S."/>
        </authorList>
    </citation>
    <scope>NUCLEOTIDE SEQUENCE [LARGE SCALE GENOMIC DNA]</scope>
    <source>
        <strain>4047</strain>
    </source>
</reference>